<sequence length="141" mass="15772">MLQCNKKAENGAMSWLDEVKWDAQGLVPVIAQEAATGDVLMFAWMNREALAKTAELGRAVYFSRSRGRLWFKGEESGHVQTVHEIRLDCDNDVVLLKVTQLGHEPGIACHTGRHSCFFSVLKDGAWQAVDPVLKDPESIYK</sequence>
<name>HIS3_PARC0</name>
<organism>
    <name type="scientific">Paracidovorax citrulli (strain AAC00-1)</name>
    <name type="common">Acidovorax citrulli</name>
    <dbReference type="NCBI Taxonomy" id="397945"/>
    <lineage>
        <taxon>Bacteria</taxon>
        <taxon>Pseudomonadati</taxon>
        <taxon>Pseudomonadota</taxon>
        <taxon>Betaproteobacteria</taxon>
        <taxon>Burkholderiales</taxon>
        <taxon>Comamonadaceae</taxon>
        <taxon>Paracidovorax</taxon>
    </lineage>
</organism>
<feature type="chain" id="PRO_0000319678" description="Phosphoribosyl-AMP cyclohydrolase">
    <location>
        <begin position="1"/>
        <end position="141"/>
    </location>
</feature>
<feature type="binding site" evidence="1">
    <location>
        <position position="88"/>
    </location>
    <ligand>
        <name>Mg(2+)</name>
        <dbReference type="ChEBI" id="CHEBI:18420"/>
    </ligand>
</feature>
<feature type="binding site" evidence="1">
    <location>
        <position position="89"/>
    </location>
    <ligand>
        <name>Zn(2+)</name>
        <dbReference type="ChEBI" id="CHEBI:29105"/>
        <note>ligand shared between dimeric partners</note>
    </ligand>
</feature>
<feature type="binding site" evidence="1">
    <location>
        <position position="90"/>
    </location>
    <ligand>
        <name>Mg(2+)</name>
        <dbReference type="ChEBI" id="CHEBI:18420"/>
    </ligand>
</feature>
<feature type="binding site" evidence="1">
    <location>
        <position position="92"/>
    </location>
    <ligand>
        <name>Mg(2+)</name>
        <dbReference type="ChEBI" id="CHEBI:18420"/>
    </ligand>
</feature>
<feature type="binding site" evidence="1">
    <location>
        <position position="109"/>
    </location>
    <ligand>
        <name>Zn(2+)</name>
        <dbReference type="ChEBI" id="CHEBI:29105"/>
        <note>ligand shared between dimeric partners</note>
    </ligand>
</feature>
<feature type="binding site" evidence="1">
    <location>
        <position position="116"/>
    </location>
    <ligand>
        <name>Zn(2+)</name>
        <dbReference type="ChEBI" id="CHEBI:29105"/>
        <note>ligand shared between dimeric partners</note>
    </ligand>
</feature>
<protein>
    <recommendedName>
        <fullName evidence="1">Phosphoribosyl-AMP cyclohydrolase</fullName>
        <shortName evidence="1">PRA-CH</shortName>
        <ecNumber evidence="1">3.5.4.19</ecNumber>
    </recommendedName>
</protein>
<comment type="function">
    <text evidence="1">Catalyzes the hydrolysis of the adenine ring of phosphoribosyl-AMP.</text>
</comment>
<comment type="catalytic activity">
    <reaction evidence="1">
        <text>1-(5-phospho-beta-D-ribosyl)-5'-AMP + H2O = 1-(5-phospho-beta-D-ribosyl)-5-[(5-phospho-beta-D-ribosylamino)methylideneamino]imidazole-4-carboxamide</text>
        <dbReference type="Rhea" id="RHEA:20049"/>
        <dbReference type="ChEBI" id="CHEBI:15377"/>
        <dbReference type="ChEBI" id="CHEBI:58435"/>
        <dbReference type="ChEBI" id="CHEBI:59457"/>
        <dbReference type="EC" id="3.5.4.19"/>
    </reaction>
</comment>
<comment type="cofactor">
    <cofactor evidence="1">
        <name>Mg(2+)</name>
        <dbReference type="ChEBI" id="CHEBI:18420"/>
    </cofactor>
    <text evidence="1">Binds 1 Mg(2+) ion per subunit.</text>
</comment>
<comment type="cofactor">
    <cofactor evidence="1">
        <name>Zn(2+)</name>
        <dbReference type="ChEBI" id="CHEBI:29105"/>
    </cofactor>
    <text evidence="1">Binds 1 zinc ion per subunit.</text>
</comment>
<comment type="pathway">
    <text evidence="1">Amino-acid biosynthesis; L-histidine biosynthesis; L-histidine from 5-phospho-alpha-D-ribose 1-diphosphate: step 3/9.</text>
</comment>
<comment type="subunit">
    <text evidence="1">Homodimer.</text>
</comment>
<comment type="subcellular location">
    <subcellularLocation>
        <location evidence="1">Cytoplasm</location>
    </subcellularLocation>
</comment>
<comment type="similarity">
    <text evidence="1">Belongs to the PRA-CH family.</text>
</comment>
<reference key="1">
    <citation type="submission" date="2006-12" db="EMBL/GenBank/DDBJ databases">
        <title>Complete sequence of Acidovorax avenae subsp. citrulli AAC00-1.</title>
        <authorList>
            <person name="Copeland A."/>
            <person name="Lucas S."/>
            <person name="Lapidus A."/>
            <person name="Barry K."/>
            <person name="Detter J.C."/>
            <person name="Glavina del Rio T."/>
            <person name="Dalin E."/>
            <person name="Tice H."/>
            <person name="Pitluck S."/>
            <person name="Kiss H."/>
            <person name="Brettin T."/>
            <person name="Bruce D."/>
            <person name="Han C."/>
            <person name="Tapia R."/>
            <person name="Gilna P."/>
            <person name="Schmutz J."/>
            <person name="Larimer F."/>
            <person name="Land M."/>
            <person name="Hauser L."/>
            <person name="Kyrpides N."/>
            <person name="Kim E."/>
            <person name="Stahl D."/>
            <person name="Richardson P."/>
        </authorList>
    </citation>
    <scope>NUCLEOTIDE SEQUENCE [LARGE SCALE GENOMIC DNA]</scope>
    <source>
        <strain>AAC00-1</strain>
    </source>
</reference>
<proteinExistence type="inferred from homology"/>
<accession>A1TL07</accession>
<dbReference type="EC" id="3.5.4.19" evidence="1"/>
<dbReference type="EMBL" id="CP000512">
    <property type="protein sequence ID" value="ABM31645.1"/>
    <property type="molecule type" value="Genomic_DNA"/>
</dbReference>
<dbReference type="SMR" id="A1TL07"/>
<dbReference type="STRING" id="397945.Aave_1048"/>
<dbReference type="KEGG" id="aav:Aave_1048"/>
<dbReference type="eggNOG" id="COG0139">
    <property type="taxonomic scope" value="Bacteria"/>
</dbReference>
<dbReference type="HOGENOM" id="CLU_048577_5_0_4"/>
<dbReference type="OrthoDB" id="9795769at2"/>
<dbReference type="UniPathway" id="UPA00031">
    <property type="reaction ID" value="UER00008"/>
</dbReference>
<dbReference type="Proteomes" id="UP000002596">
    <property type="component" value="Chromosome"/>
</dbReference>
<dbReference type="GO" id="GO:0005737">
    <property type="term" value="C:cytoplasm"/>
    <property type="evidence" value="ECO:0007669"/>
    <property type="project" value="UniProtKB-SubCell"/>
</dbReference>
<dbReference type="GO" id="GO:0000287">
    <property type="term" value="F:magnesium ion binding"/>
    <property type="evidence" value="ECO:0007669"/>
    <property type="project" value="UniProtKB-UniRule"/>
</dbReference>
<dbReference type="GO" id="GO:0004635">
    <property type="term" value="F:phosphoribosyl-AMP cyclohydrolase activity"/>
    <property type="evidence" value="ECO:0007669"/>
    <property type="project" value="UniProtKB-UniRule"/>
</dbReference>
<dbReference type="GO" id="GO:0008270">
    <property type="term" value="F:zinc ion binding"/>
    <property type="evidence" value="ECO:0007669"/>
    <property type="project" value="UniProtKB-UniRule"/>
</dbReference>
<dbReference type="GO" id="GO:0000105">
    <property type="term" value="P:L-histidine biosynthetic process"/>
    <property type="evidence" value="ECO:0007669"/>
    <property type="project" value="UniProtKB-UniRule"/>
</dbReference>
<dbReference type="FunFam" id="3.10.20.810:FF:000001">
    <property type="entry name" value="Histidine biosynthesis bifunctional protein HisIE"/>
    <property type="match status" value="1"/>
</dbReference>
<dbReference type="Gene3D" id="3.10.20.810">
    <property type="entry name" value="Phosphoribosyl-AMP cyclohydrolase"/>
    <property type="match status" value="1"/>
</dbReference>
<dbReference type="HAMAP" id="MF_01021">
    <property type="entry name" value="HisI"/>
    <property type="match status" value="1"/>
</dbReference>
<dbReference type="InterPro" id="IPR026660">
    <property type="entry name" value="PRA-CH"/>
</dbReference>
<dbReference type="InterPro" id="IPR002496">
    <property type="entry name" value="PRib_AMP_CycHydrolase_dom"/>
</dbReference>
<dbReference type="InterPro" id="IPR038019">
    <property type="entry name" value="PRib_AMP_CycHydrolase_sf"/>
</dbReference>
<dbReference type="NCBIfam" id="NF000768">
    <property type="entry name" value="PRK00051.1"/>
    <property type="match status" value="1"/>
</dbReference>
<dbReference type="PANTHER" id="PTHR42945">
    <property type="entry name" value="HISTIDINE BIOSYNTHESIS BIFUNCTIONAL PROTEIN"/>
    <property type="match status" value="1"/>
</dbReference>
<dbReference type="PANTHER" id="PTHR42945:SF1">
    <property type="entry name" value="HISTIDINE BIOSYNTHESIS BIFUNCTIONAL PROTEIN HIS7"/>
    <property type="match status" value="1"/>
</dbReference>
<dbReference type="Pfam" id="PF01502">
    <property type="entry name" value="PRA-CH"/>
    <property type="match status" value="1"/>
</dbReference>
<dbReference type="SUPFAM" id="SSF141734">
    <property type="entry name" value="HisI-like"/>
    <property type="match status" value="1"/>
</dbReference>
<evidence type="ECO:0000255" key="1">
    <source>
        <dbReference type="HAMAP-Rule" id="MF_01021"/>
    </source>
</evidence>
<gene>
    <name evidence="1" type="primary">hisI</name>
    <name type="ordered locus">Aave_1048</name>
</gene>
<keyword id="KW-0028">Amino-acid biosynthesis</keyword>
<keyword id="KW-0963">Cytoplasm</keyword>
<keyword id="KW-0368">Histidine biosynthesis</keyword>
<keyword id="KW-0378">Hydrolase</keyword>
<keyword id="KW-0460">Magnesium</keyword>
<keyword id="KW-0479">Metal-binding</keyword>
<keyword id="KW-0862">Zinc</keyword>